<keyword id="KW-0963">Cytoplasm</keyword>
<keyword id="KW-0539">Nucleus</keyword>
<keyword id="KW-1185">Reference proteome</keyword>
<protein>
    <recommendedName>
        <fullName>G patch domain-containing protein 3</fullName>
    </recommendedName>
</protein>
<name>GPTC3_MOUSE</name>
<accession>Q8BIY1</accession>
<accession>A2A9E8</accession>
<comment type="function">
    <text evidence="1">Involved in transcriptional regulation. It is able to activate transcription from CXCR4 promoter and therefore it might control neural crest cell migration involved in ocular and craniofacial development. Is a negative regulator of immune antiviral response, acting via down-regulation of RIG-I-like receptors signaling and inhibition of type I interferon production. The control mechanism involves interaction with mitochondrial MAVS and inhibition of MAVS assembly with downstream proteins implicated in antiviral response, such as TBK1 and TRAF6.</text>
</comment>
<comment type="subunit">
    <text evidence="1">Interacts with mitochondrial MAVS; the interaction is markedly increased upon viral infection.</text>
</comment>
<comment type="subcellular location">
    <subcellularLocation>
        <location evidence="1">Nucleus</location>
    </subcellularLocation>
    <subcellularLocation>
        <location evidence="1">Cytoplasm</location>
    </subcellularLocation>
</comment>
<proteinExistence type="evidence at transcript level"/>
<feature type="chain" id="PRO_0000087569" description="G patch domain-containing protein 3">
    <location>
        <begin position="1"/>
        <end position="525"/>
    </location>
</feature>
<feature type="domain" description="G-patch" evidence="2">
    <location>
        <begin position="411"/>
        <end position="459"/>
    </location>
</feature>
<feature type="region of interest" description="Disordered" evidence="3">
    <location>
        <begin position="54"/>
        <end position="85"/>
    </location>
</feature>
<feature type="region of interest" description="Disordered" evidence="3">
    <location>
        <begin position="246"/>
        <end position="317"/>
    </location>
</feature>
<feature type="compositionally biased region" description="Acidic residues" evidence="3">
    <location>
        <begin position="274"/>
        <end position="299"/>
    </location>
</feature>
<feature type="compositionally biased region" description="Basic and acidic residues" evidence="3">
    <location>
        <begin position="300"/>
        <end position="317"/>
    </location>
</feature>
<gene>
    <name type="primary">Gpatch3</name>
    <name type="synonym">Gpatc3</name>
</gene>
<sequence length="525" mass="59180">MASPRELDEESPVYLVVSGIPAVLRSAQLRSYFSQFREQRGGGFLCFHYRHRPERGPPQASPEAARAGPDPAAEDPVLAQAPASDARAVRARGSAAAQTRTCCCVVSVRGAAQAQRLLRMYSGRRWLDSQGTWLPGRCLIRRLRLPTEVSDLGSFPFKTRKELQSRRAENEAFTLADLKQLPELNPPVLMPNGNVGTPLRVFLELIRSCRLPPRIITQLQLQFPKTGSSRRYGNVPFLYEDSETVEQEEHVYTAEGEEIPQGSCSEDPAAGSFDEPEDEGQQQEEEEESGSEEDDDRGEEWERHEALHEDVTGQERTTERLFEEEIELKWEKGGSGLVFYTDAQFWQEEEGDFDEQTADDWDVDMSVYYDRDGGDKDARDSVQMRLERRLREGQEDGSVLGGQVGTFERHTKGIGRKVMERQGWAEGQGLGSRCSGVPEALDGDGQHPRCKRGLGYHGEKLQPFRQLKRPRRTGLGLISTIYDEPLPQDQGETLLRRQPPTSMKFRTDMTFVKGSSCALDRPEPE</sequence>
<evidence type="ECO:0000250" key="1">
    <source>
        <dbReference type="UniProtKB" id="Q96I76"/>
    </source>
</evidence>
<evidence type="ECO:0000255" key="2">
    <source>
        <dbReference type="PROSITE-ProRule" id="PRU00092"/>
    </source>
</evidence>
<evidence type="ECO:0000256" key="3">
    <source>
        <dbReference type="SAM" id="MobiDB-lite"/>
    </source>
</evidence>
<organism>
    <name type="scientific">Mus musculus</name>
    <name type="common">Mouse</name>
    <dbReference type="NCBI Taxonomy" id="10090"/>
    <lineage>
        <taxon>Eukaryota</taxon>
        <taxon>Metazoa</taxon>
        <taxon>Chordata</taxon>
        <taxon>Craniata</taxon>
        <taxon>Vertebrata</taxon>
        <taxon>Euteleostomi</taxon>
        <taxon>Mammalia</taxon>
        <taxon>Eutheria</taxon>
        <taxon>Euarchontoglires</taxon>
        <taxon>Glires</taxon>
        <taxon>Rodentia</taxon>
        <taxon>Myomorpha</taxon>
        <taxon>Muroidea</taxon>
        <taxon>Muridae</taxon>
        <taxon>Murinae</taxon>
        <taxon>Mus</taxon>
        <taxon>Mus</taxon>
    </lineage>
</organism>
<dbReference type="EMBL" id="AK053051">
    <property type="protein sequence ID" value="BAC35250.1"/>
    <property type="molecule type" value="mRNA"/>
</dbReference>
<dbReference type="EMBL" id="AL627228">
    <property type="status" value="NOT_ANNOTATED_CDS"/>
    <property type="molecule type" value="Genomic_DNA"/>
</dbReference>
<dbReference type="CCDS" id="CCDS18752.1"/>
<dbReference type="RefSeq" id="NP_766464.1">
    <property type="nucleotide sequence ID" value="NM_172876.2"/>
</dbReference>
<dbReference type="BioGRID" id="232444">
    <property type="interactions" value="1"/>
</dbReference>
<dbReference type="FunCoup" id="Q8BIY1">
    <property type="interactions" value="3555"/>
</dbReference>
<dbReference type="STRING" id="10090.ENSMUSP00000030662"/>
<dbReference type="iPTMnet" id="Q8BIY1"/>
<dbReference type="PhosphoSitePlus" id="Q8BIY1"/>
<dbReference type="PaxDb" id="10090-ENSMUSP00000030662"/>
<dbReference type="ProteomicsDB" id="271155"/>
<dbReference type="Antibodypedia" id="35286">
    <property type="antibodies" value="29 antibodies from 12 providers"/>
</dbReference>
<dbReference type="DNASU" id="242691"/>
<dbReference type="Ensembl" id="ENSMUST00000030662.3">
    <property type="protein sequence ID" value="ENSMUSP00000030662.3"/>
    <property type="gene ID" value="ENSMUSG00000028850.3"/>
</dbReference>
<dbReference type="GeneID" id="242691"/>
<dbReference type="KEGG" id="mmu:242691"/>
<dbReference type="UCSC" id="uc008vda.1">
    <property type="organism name" value="mouse"/>
</dbReference>
<dbReference type="AGR" id="MGI:2442492"/>
<dbReference type="CTD" id="63906"/>
<dbReference type="MGI" id="MGI:2442492">
    <property type="gene designation" value="Gpatch3"/>
</dbReference>
<dbReference type="VEuPathDB" id="HostDB:ENSMUSG00000028850"/>
<dbReference type="eggNOG" id="ENOG502QQ66">
    <property type="taxonomic scope" value="Eukaryota"/>
</dbReference>
<dbReference type="GeneTree" id="ENSGT00390000004191"/>
<dbReference type="HOGENOM" id="CLU_025388_0_0_1"/>
<dbReference type="InParanoid" id="Q8BIY1"/>
<dbReference type="OMA" id="GGFHCFH"/>
<dbReference type="OrthoDB" id="5842926at2759"/>
<dbReference type="PhylomeDB" id="Q8BIY1"/>
<dbReference type="TreeFam" id="TF314766"/>
<dbReference type="BioGRID-ORCS" id="242691">
    <property type="hits" value="6 hits in 77 CRISPR screens"/>
</dbReference>
<dbReference type="ChiTaRS" id="Gpatch3">
    <property type="organism name" value="mouse"/>
</dbReference>
<dbReference type="PRO" id="PR:Q8BIY1"/>
<dbReference type="Proteomes" id="UP000000589">
    <property type="component" value="Chromosome 4"/>
</dbReference>
<dbReference type="RNAct" id="Q8BIY1">
    <property type="molecule type" value="protein"/>
</dbReference>
<dbReference type="Bgee" id="ENSMUSG00000028850">
    <property type="expression patterns" value="Expressed in cleaving embryo and 117 other cell types or tissues"/>
</dbReference>
<dbReference type="GO" id="GO:0005737">
    <property type="term" value="C:cytoplasm"/>
    <property type="evidence" value="ECO:0000250"/>
    <property type="project" value="UniProtKB"/>
</dbReference>
<dbReference type="GO" id="GO:0005829">
    <property type="term" value="C:cytosol"/>
    <property type="evidence" value="ECO:0007669"/>
    <property type="project" value="Ensembl"/>
</dbReference>
<dbReference type="GO" id="GO:0005654">
    <property type="term" value="C:nucleoplasm"/>
    <property type="evidence" value="ECO:0007669"/>
    <property type="project" value="Ensembl"/>
</dbReference>
<dbReference type="GO" id="GO:0005634">
    <property type="term" value="C:nucleus"/>
    <property type="evidence" value="ECO:0000250"/>
    <property type="project" value="UniProtKB"/>
</dbReference>
<dbReference type="GO" id="GO:0003676">
    <property type="term" value="F:nucleic acid binding"/>
    <property type="evidence" value="ECO:0007669"/>
    <property type="project" value="InterPro"/>
</dbReference>
<dbReference type="GO" id="GO:0039536">
    <property type="term" value="P:negative regulation of RIG-I signaling pathway"/>
    <property type="evidence" value="ECO:0007669"/>
    <property type="project" value="Ensembl"/>
</dbReference>
<dbReference type="GO" id="GO:0032480">
    <property type="term" value="P:negative regulation of type I interferon production"/>
    <property type="evidence" value="ECO:0007669"/>
    <property type="project" value="Ensembl"/>
</dbReference>
<dbReference type="GO" id="GO:0045893">
    <property type="term" value="P:positive regulation of DNA-templated transcription"/>
    <property type="evidence" value="ECO:0000250"/>
    <property type="project" value="UniProtKB"/>
</dbReference>
<dbReference type="InterPro" id="IPR000467">
    <property type="entry name" value="G_patch_dom"/>
</dbReference>
<dbReference type="InterPro" id="IPR040341">
    <property type="entry name" value="GPATCH3"/>
</dbReference>
<dbReference type="PANTHER" id="PTHR14390">
    <property type="entry name" value="G PATCH DOMAIN CONTAINING PROTEIN 3"/>
    <property type="match status" value="1"/>
</dbReference>
<dbReference type="PANTHER" id="PTHR14390:SF2">
    <property type="entry name" value="G PATCH DOMAIN-CONTAINING PROTEIN 3"/>
    <property type="match status" value="1"/>
</dbReference>
<dbReference type="Pfam" id="PF01585">
    <property type="entry name" value="G-patch"/>
    <property type="match status" value="1"/>
</dbReference>
<dbReference type="SMART" id="SM00443">
    <property type="entry name" value="G_patch"/>
    <property type="match status" value="1"/>
</dbReference>
<dbReference type="PROSITE" id="PS50174">
    <property type="entry name" value="G_PATCH"/>
    <property type="match status" value="1"/>
</dbReference>
<reference key="1">
    <citation type="journal article" date="2005" name="Science">
        <title>The transcriptional landscape of the mammalian genome.</title>
        <authorList>
            <person name="Carninci P."/>
            <person name="Kasukawa T."/>
            <person name="Katayama S."/>
            <person name="Gough J."/>
            <person name="Frith M.C."/>
            <person name="Maeda N."/>
            <person name="Oyama R."/>
            <person name="Ravasi T."/>
            <person name="Lenhard B."/>
            <person name="Wells C."/>
            <person name="Kodzius R."/>
            <person name="Shimokawa K."/>
            <person name="Bajic V.B."/>
            <person name="Brenner S.E."/>
            <person name="Batalov S."/>
            <person name="Forrest A.R."/>
            <person name="Zavolan M."/>
            <person name="Davis M.J."/>
            <person name="Wilming L.G."/>
            <person name="Aidinis V."/>
            <person name="Allen J.E."/>
            <person name="Ambesi-Impiombato A."/>
            <person name="Apweiler R."/>
            <person name="Aturaliya R.N."/>
            <person name="Bailey T.L."/>
            <person name="Bansal M."/>
            <person name="Baxter L."/>
            <person name="Beisel K.W."/>
            <person name="Bersano T."/>
            <person name="Bono H."/>
            <person name="Chalk A.M."/>
            <person name="Chiu K.P."/>
            <person name="Choudhary V."/>
            <person name="Christoffels A."/>
            <person name="Clutterbuck D.R."/>
            <person name="Crowe M.L."/>
            <person name="Dalla E."/>
            <person name="Dalrymple B.P."/>
            <person name="de Bono B."/>
            <person name="Della Gatta G."/>
            <person name="di Bernardo D."/>
            <person name="Down T."/>
            <person name="Engstrom P."/>
            <person name="Fagiolini M."/>
            <person name="Faulkner G."/>
            <person name="Fletcher C.F."/>
            <person name="Fukushima T."/>
            <person name="Furuno M."/>
            <person name="Futaki S."/>
            <person name="Gariboldi M."/>
            <person name="Georgii-Hemming P."/>
            <person name="Gingeras T.R."/>
            <person name="Gojobori T."/>
            <person name="Green R.E."/>
            <person name="Gustincich S."/>
            <person name="Harbers M."/>
            <person name="Hayashi Y."/>
            <person name="Hensch T.K."/>
            <person name="Hirokawa N."/>
            <person name="Hill D."/>
            <person name="Huminiecki L."/>
            <person name="Iacono M."/>
            <person name="Ikeo K."/>
            <person name="Iwama A."/>
            <person name="Ishikawa T."/>
            <person name="Jakt M."/>
            <person name="Kanapin A."/>
            <person name="Katoh M."/>
            <person name="Kawasawa Y."/>
            <person name="Kelso J."/>
            <person name="Kitamura H."/>
            <person name="Kitano H."/>
            <person name="Kollias G."/>
            <person name="Krishnan S.P."/>
            <person name="Kruger A."/>
            <person name="Kummerfeld S.K."/>
            <person name="Kurochkin I.V."/>
            <person name="Lareau L.F."/>
            <person name="Lazarevic D."/>
            <person name="Lipovich L."/>
            <person name="Liu J."/>
            <person name="Liuni S."/>
            <person name="McWilliam S."/>
            <person name="Madan Babu M."/>
            <person name="Madera M."/>
            <person name="Marchionni L."/>
            <person name="Matsuda H."/>
            <person name="Matsuzawa S."/>
            <person name="Miki H."/>
            <person name="Mignone F."/>
            <person name="Miyake S."/>
            <person name="Morris K."/>
            <person name="Mottagui-Tabar S."/>
            <person name="Mulder N."/>
            <person name="Nakano N."/>
            <person name="Nakauchi H."/>
            <person name="Ng P."/>
            <person name="Nilsson R."/>
            <person name="Nishiguchi S."/>
            <person name="Nishikawa S."/>
            <person name="Nori F."/>
            <person name="Ohara O."/>
            <person name="Okazaki Y."/>
            <person name="Orlando V."/>
            <person name="Pang K.C."/>
            <person name="Pavan W.J."/>
            <person name="Pavesi G."/>
            <person name="Pesole G."/>
            <person name="Petrovsky N."/>
            <person name="Piazza S."/>
            <person name="Reed J."/>
            <person name="Reid J.F."/>
            <person name="Ring B.Z."/>
            <person name="Ringwald M."/>
            <person name="Rost B."/>
            <person name="Ruan Y."/>
            <person name="Salzberg S.L."/>
            <person name="Sandelin A."/>
            <person name="Schneider C."/>
            <person name="Schoenbach C."/>
            <person name="Sekiguchi K."/>
            <person name="Semple C.A."/>
            <person name="Seno S."/>
            <person name="Sessa L."/>
            <person name="Sheng Y."/>
            <person name="Shibata Y."/>
            <person name="Shimada H."/>
            <person name="Shimada K."/>
            <person name="Silva D."/>
            <person name="Sinclair B."/>
            <person name="Sperling S."/>
            <person name="Stupka E."/>
            <person name="Sugiura K."/>
            <person name="Sultana R."/>
            <person name="Takenaka Y."/>
            <person name="Taki K."/>
            <person name="Tammoja K."/>
            <person name="Tan S.L."/>
            <person name="Tang S."/>
            <person name="Taylor M.S."/>
            <person name="Tegner J."/>
            <person name="Teichmann S.A."/>
            <person name="Ueda H.R."/>
            <person name="van Nimwegen E."/>
            <person name="Verardo R."/>
            <person name="Wei C.L."/>
            <person name="Yagi K."/>
            <person name="Yamanishi H."/>
            <person name="Zabarovsky E."/>
            <person name="Zhu S."/>
            <person name="Zimmer A."/>
            <person name="Hide W."/>
            <person name="Bult C."/>
            <person name="Grimmond S.M."/>
            <person name="Teasdale R.D."/>
            <person name="Liu E.T."/>
            <person name="Brusic V."/>
            <person name="Quackenbush J."/>
            <person name="Wahlestedt C."/>
            <person name="Mattick J.S."/>
            <person name="Hume D.A."/>
            <person name="Kai C."/>
            <person name="Sasaki D."/>
            <person name="Tomaru Y."/>
            <person name="Fukuda S."/>
            <person name="Kanamori-Katayama M."/>
            <person name="Suzuki M."/>
            <person name="Aoki J."/>
            <person name="Arakawa T."/>
            <person name="Iida J."/>
            <person name="Imamura K."/>
            <person name="Itoh M."/>
            <person name="Kato T."/>
            <person name="Kawaji H."/>
            <person name="Kawagashira N."/>
            <person name="Kawashima T."/>
            <person name="Kojima M."/>
            <person name="Kondo S."/>
            <person name="Konno H."/>
            <person name="Nakano K."/>
            <person name="Ninomiya N."/>
            <person name="Nishio T."/>
            <person name="Okada M."/>
            <person name="Plessy C."/>
            <person name="Shibata K."/>
            <person name="Shiraki T."/>
            <person name="Suzuki S."/>
            <person name="Tagami M."/>
            <person name="Waki K."/>
            <person name="Watahiki A."/>
            <person name="Okamura-Oho Y."/>
            <person name="Suzuki H."/>
            <person name="Kawai J."/>
            <person name="Hayashizaki Y."/>
        </authorList>
    </citation>
    <scope>NUCLEOTIDE SEQUENCE [LARGE SCALE MRNA]</scope>
    <source>
        <strain>C57BL/6J</strain>
        <tissue>Head</tissue>
    </source>
</reference>
<reference key="2">
    <citation type="journal article" date="2009" name="PLoS Biol.">
        <title>Lineage-specific biology revealed by a finished genome assembly of the mouse.</title>
        <authorList>
            <person name="Church D.M."/>
            <person name="Goodstadt L."/>
            <person name="Hillier L.W."/>
            <person name="Zody M.C."/>
            <person name="Goldstein S."/>
            <person name="She X."/>
            <person name="Bult C.J."/>
            <person name="Agarwala R."/>
            <person name="Cherry J.L."/>
            <person name="DiCuccio M."/>
            <person name="Hlavina W."/>
            <person name="Kapustin Y."/>
            <person name="Meric P."/>
            <person name="Maglott D."/>
            <person name="Birtle Z."/>
            <person name="Marques A.C."/>
            <person name="Graves T."/>
            <person name="Zhou S."/>
            <person name="Teague B."/>
            <person name="Potamousis K."/>
            <person name="Churas C."/>
            <person name="Place M."/>
            <person name="Herschleb J."/>
            <person name="Runnheim R."/>
            <person name="Forrest D."/>
            <person name="Amos-Landgraf J."/>
            <person name="Schwartz D.C."/>
            <person name="Cheng Z."/>
            <person name="Lindblad-Toh K."/>
            <person name="Eichler E.E."/>
            <person name="Ponting C.P."/>
        </authorList>
    </citation>
    <scope>NUCLEOTIDE SEQUENCE [LARGE SCALE GENOMIC DNA]</scope>
    <source>
        <strain>C57BL/6J</strain>
    </source>
</reference>